<accession>Q7PYF4</accession>
<accession>A1C3K9</accession>
<organism>
    <name type="scientific">Anopheles gambiae</name>
    <name type="common">African malaria mosquito</name>
    <dbReference type="NCBI Taxonomy" id="7165"/>
    <lineage>
        <taxon>Eukaryota</taxon>
        <taxon>Metazoa</taxon>
        <taxon>Ecdysozoa</taxon>
        <taxon>Arthropoda</taxon>
        <taxon>Hexapoda</taxon>
        <taxon>Insecta</taxon>
        <taxon>Pterygota</taxon>
        <taxon>Neoptera</taxon>
        <taxon>Endopterygota</taxon>
        <taxon>Diptera</taxon>
        <taxon>Nematocera</taxon>
        <taxon>Culicoidea</taxon>
        <taxon>Culicidae</taxon>
        <taxon>Anophelinae</taxon>
        <taxon>Anopheles</taxon>
    </lineage>
</organism>
<feature type="chain" id="PRO_0000296318" description="Gustatory and odorant receptor 24">
    <location>
        <begin position="1"/>
        <end position="457"/>
    </location>
</feature>
<feature type="topological domain" description="Cytoplasmic" evidence="1">
    <location>
        <begin position="1"/>
        <end position="115"/>
    </location>
</feature>
<feature type="transmembrane region" description="Helical; Name=1" evidence="2">
    <location>
        <begin position="116"/>
        <end position="136"/>
    </location>
</feature>
<feature type="topological domain" description="Extracellular" evidence="1">
    <location>
        <begin position="137"/>
        <end position="152"/>
    </location>
</feature>
<feature type="transmembrane region" description="Helical; Name=2" evidence="2">
    <location>
        <begin position="153"/>
        <end position="173"/>
    </location>
</feature>
<feature type="topological domain" description="Cytoplasmic" evidence="1">
    <location>
        <begin position="174"/>
        <end position="209"/>
    </location>
</feature>
<feature type="transmembrane region" description="Helical; Name=3" evidence="2">
    <location>
        <begin position="210"/>
        <end position="230"/>
    </location>
</feature>
<feature type="topological domain" description="Extracellular" evidence="1">
    <location>
        <begin position="231"/>
        <end position="237"/>
    </location>
</feature>
<feature type="transmembrane region" description="Helical; Name=4" evidence="2">
    <location>
        <begin position="238"/>
        <end position="258"/>
    </location>
</feature>
<feature type="topological domain" description="Cytoplasmic" evidence="1">
    <location>
        <begin position="259"/>
        <end position="309"/>
    </location>
</feature>
<feature type="transmembrane region" description="Helical; Name=5" evidence="2">
    <location>
        <begin position="310"/>
        <end position="330"/>
    </location>
</feature>
<feature type="topological domain" description="Extracellular" evidence="1">
    <location>
        <begin position="331"/>
        <end position="341"/>
    </location>
</feature>
<feature type="transmembrane region" description="Helical; Name=6" evidence="2">
    <location>
        <begin position="342"/>
        <end position="362"/>
    </location>
</feature>
<feature type="topological domain" description="Cytoplasmic" evidence="1">
    <location>
        <begin position="363"/>
        <end position="421"/>
    </location>
</feature>
<feature type="transmembrane region" description="Helical; Name=7" evidence="2">
    <location>
        <begin position="422"/>
        <end position="442"/>
    </location>
</feature>
<feature type="topological domain" description="Extracellular" evidence="1">
    <location>
        <begin position="443"/>
        <end position="457"/>
    </location>
</feature>
<feature type="glycosylation site" description="N-linked (GlcNAc...) asparagine" evidence="2">
    <location>
        <position position="453"/>
    </location>
</feature>
<feature type="sequence conflict" description="In Ref. 2; ABK97614." evidence="4" ref="2">
    <original>T</original>
    <variation>S</variation>
    <location>
        <position position="196"/>
    </location>
</feature>
<proteinExistence type="evidence at transcript level"/>
<reference key="1">
    <citation type="journal article" date="2002" name="Science">
        <title>The genome sequence of the malaria mosquito Anopheles gambiae.</title>
        <authorList>
            <person name="Holt R.A."/>
            <person name="Subramanian G.M."/>
            <person name="Halpern A."/>
            <person name="Sutton G.G."/>
            <person name="Charlab R."/>
            <person name="Nusskern D.R."/>
            <person name="Wincker P."/>
            <person name="Clark A.G."/>
            <person name="Ribeiro J.M.C."/>
            <person name="Wides R."/>
            <person name="Salzberg S.L."/>
            <person name="Loftus B.J."/>
            <person name="Yandell M.D."/>
            <person name="Majoros W.H."/>
            <person name="Rusch D.B."/>
            <person name="Lai Z."/>
            <person name="Kraft C.L."/>
            <person name="Abril J.F."/>
            <person name="Anthouard V."/>
            <person name="Arensburger P."/>
            <person name="Atkinson P.W."/>
            <person name="Baden H."/>
            <person name="de Berardinis V."/>
            <person name="Baldwin D."/>
            <person name="Benes V."/>
            <person name="Biedler J."/>
            <person name="Blass C."/>
            <person name="Bolanos R."/>
            <person name="Boscus D."/>
            <person name="Barnstead M."/>
            <person name="Cai S."/>
            <person name="Center A."/>
            <person name="Chaturverdi K."/>
            <person name="Christophides G.K."/>
            <person name="Chrystal M.A.M."/>
            <person name="Clamp M."/>
            <person name="Cravchik A."/>
            <person name="Curwen V."/>
            <person name="Dana A."/>
            <person name="Delcher A."/>
            <person name="Dew I."/>
            <person name="Evans C.A."/>
            <person name="Flanigan M."/>
            <person name="Grundschober-Freimoser A."/>
            <person name="Friedli L."/>
            <person name="Gu Z."/>
            <person name="Guan P."/>
            <person name="Guigo R."/>
            <person name="Hillenmeyer M.E."/>
            <person name="Hladun S.L."/>
            <person name="Hogan J.R."/>
            <person name="Hong Y.S."/>
            <person name="Hoover J."/>
            <person name="Jaillon O."/>
            <person name="Ke Z."/>
            <person name="Kodira C.D."/>
            <person name="Kokoza E."/>
            <person name="Koutsos A."/>
            <person name="Letunic I."/>
            <person name="Levitsky A.A."/>
            <person name="Liang Y."/>
            <person name="Lin J.-J."/>
            <person name="Lobo N.F."/>
            <person name="Lopez J.R."/>
            <person name="Malek J.A."/>
            <person name="McIntosh T.C."/>
            <person name="Meister S."/>
            <person name="Miller J.R."/>
            <person name="Mobarry C."/>
            <person name="Mongin E."/>
            <person name="Murphy S.D."/>
            <person name="O'Brochta D.A."/>
            <person name="Pfannkoch C."/>
            <person name="Qi R."/>
            <person name="Regier M.A."/>
            <person name="Remington K."/>
            <person name="Shao H."/>
            <person name="Sharakhova M.V."/>
            <person name="Sitter C.D."/>
            <person name="Shetty J."/>
            <person name="Smith T.J."/>
            <person name="Strong R."/>
            <person name="Sun J."/>
            <person name="Thomasova D."/>
            <person name="Ton L.Q."/>
            <person name="Topalis P."/>
            <person name="Tu Z.J."/>
            <person name="Unger M.F."/>
            <person name="Walenz B."/>
            <person name="Wang A.H."/>
            <person name="Wang J."/>
            <person name="Wang M."/>
            <person name="Wang X."/>
            <person name="Woodford K.J."/>
            <person name="Wortman J.R."/>
            <person name="Wu M."/>
            <person name="Yao A."/>
            <person name="Zdobnov E.M."/>
            <person name="Zhang H."/>
            <person name="Zhao Q."/>
            <person name="Zhao S."/>
            <person name="Zhu S.C."/>
            <person name="Zhimulev I."/>
            <person name="Coluzzi M."/>
            <person name="della Torre A."/>
            <person name="Roth C.W."/>
            <person name="Louis C."/>
            <person name="Kalush F."/>
            <person name="Mural R.J."/>
            <person name="Myers E.W."/>
            <person name="Adams M.D."/>
            <person name="Smith H.O."/>
            <person name="Broder S."/>
            <person name="Gardner M.J."/>
            <person name="Fraser C.M."/>
            <person name="Birney E."/>
            <person name="Bork P."/>
            <person name="Brey P.T."/>
            <person name="Venter J.C."/>
            <person name="Weissenbach J."/>
            <person name="Kafatos F.C."/>
            <person name="Collins F.H."/>
            <person name="Hoffman S.L."/>
        </authorList>
    </citation>
    <scope>NUCLEOTIDE SEQUENCE [LARGE SCALE GENOMIC DNA]</scope>
    <source>
        <strain>PEST</strain>
    </source>
</reference>
<reference evidence="4 5" key="2">
    <citation type="journal article" date="2007" name="Nature">
        <title>Two chemosensory receptors together mediate carbon dioxide detection in Drosophila.</title>
        <authorList>
            <person name="Jones W.D."/>
            <person name="Cayirlioglu P."/>
            <person name="Grunwald Kadow I."/>
            <person name="Vosshall L.B."/>
        </authorList>
    </citation>
    <scope>NUCLEOTIDE SEQUENCE [MRNA] OF 80-457</scope>
    <scope>FUNCTION</scope>
    <scope>TISSUE SPECIFICITY</scope>
    <source>
        <strain evidence="5">G3</strain>
        <tissue evidence="5">Head</tissue>
    </source>
</reference>
<sequence length="457" mass="51736">MSLYFNADTMRIERSSVHEPKRNRNVFLDVKPIADDANVNVPPRQAARRNATVFNNRVGFPPLTPKEAFVDAVPADQTCMVFESSKPIYLVLRAIGVLPYTRLPSGGTAFVLASPSMTYCVLFFLLLTVYIAFILLNRIEIVRTLEGRFEESVIAYLFIVNILPILIIPLMWYESRKVVSVVNGWVDFETVYRETTGRALELRLRTKAQVIAILLPILCSLSVAITHVTMVDFKLLQVIPYCVLDTITYMMGGYWYMACETLSITAKILAEDFQRALRHVGPAAKVSEYRSLWLRLSKLARDTGFSTCYTFTFICLYLFFIITLSIYGLMSQISDGFGVKDIGLAVTAFCSVGLLFYICDEAHYASFNVRTNFQKKLLMVELSWMNTDAQTEINMFLRATEMNPSSINLGGFFDVNRTLFKSLLATMVTYLVVLLQFQISIPDEPSAMLMHSNSSHS</sequence>
<dbReference type="EMBL" id="AAAB01008987">
    <property type="protein sequence ID" value="EAA01019.4"/>
    <property type="molecule type" value="Genomic_DNA"/>
</dbReference>
<dbReference type="EMBL" id="DQ989013">
    <property type="protein sequence ID" value="ABK97614.1"/>
    <property type="molecule type" value="mRNA"/>
</dbReference>
<dbReference type="RefSeq" id="XP_321150.4">
    <property type="nucleotide sequence ID" value="XM_321150.5"/>
</dbReference>
<dbReference type="SMR" id="Q7PYF4"/>
<dbReference type="FunCoup" id="Q7PYF4">
    <property type="interactions" value="8"/>
</dbReference>
<dbReference type="STRING" id="7165.Q7PYF4"/>
<dbReference type="GlyCosmos" id="Q7PYF4">
    <property type="glycosylation" value="1 site, No reported glycans"/>
</dbReference>
<dbReference type="PaxDb" id="7165-AGAP001915-PA"/>
<dbReference type="EnsemblMetazoa" id="AGAP001915-RA">
    <property type="protein sequence ID" value="AGAP001915-PA"/>
    <property type="gene ID" value="AGAP001915"/>
</dbReference>
<dbReference type="VEuPathDB" id="VectorBase:AGAMI1_001366"/>
<dbReference type="VEuPathDB" id="VectorBase:AGAP001915"/>
<dbReference type="eggNOG" id="ENOG502SPS2">
    <property type="taxonomic scope" value="Eukaryota"/>
</dbReference>
<dbReference type="HOGENOM" id="CLU_049090_0_0_1"/>
<dbReference type="InParanoid" id="Q7PYF4"/>
<dbReference type="OMA" id="ITTMVTY"/>
<dbReference type="PhylomeDB" id="Q7PYF4"/>
<dbReference type="Proteomes" id="UP000007062">
    <property type="component" value="Chromosome 2R"/>
</dbReference>
<dbReference type="GO" id="GO:0030424">
    <property type="term" value="C:axon"/>
    <property type="evidence" value="ECO:0000318"/>
    <property type="project" value="GO_Central"/>
</dbReference>
<dbReference type="GO" id="GO:0030425">
    <property type="term" value="C:dendrite"/>
    <property type="evidence" value="ECO:0000318"/>
    <property type="project" value="GO_Central"/>
</dbReference>
<dbReference type="GO" id="GO:0016020">
    <property type="term" value="C:membrane"/>
    <property type="evidence" value="ECO:0000305"/>
    <property type="project" value="UniProtKB"/>
</dbReference>
<dbReference type="GO" id="GO:0043025">
    <property type="term" value="C:neuronal cell body"/>
    <property type="evidence" value="ECO:0000318"/>
    <property type="project" value="GO_Central"/>
</dbReference>
<dbReference type="GO" id="GO:0005886">
    <property type="term" value="C:plasma membrane"/>
    <property type="evidence" value="ECO:0007669"/>
    <property type="project" value="UniProtKB-SubCell"/>
</dbReference>
<dbReference type="GO" id="GO:0004984">
    <property type="term" value="F:olfactory receptor activity"/>
    <property type="evidence" value="ECO:0000315"/>
    <property type="project" value="UniProtKB"/>
</dbReference>
<dbReference type="GO" id="GO:0008527">
    <property type="term" value="F:taste receptor activity"/>
    <property type="evidence" value="ECO:0000315"/>
    <property type="project" value="UniProtKB"/>
</dbReference>
<dbReference type="GO" id="GO:0010037">
    <property type="term" value="P:response to carbon dioxide"/>
    <property type="evidence" value="ECO:0000315"/>
    <property type="project" value="UniProtKB"/>
</dbReference>
<dbReference type="GO" id="GO:0007608">
    <property type="term" value="P:sensory perception of smell"/>
    <property type="evidence" value="ECO:0000315"/>
    <property type="project" value="UniProtKB"/>
</dbReference>
<dbReference type="GO" id="GO:0050909">
    <property type="term" value="P:sensory perception of taste"/>
    <property type="evidence" value="ECO:0000315"/>
    <property type="project" value="UniProtKB"/>
</dbReference>
<dbReference type="GO" id="GO:0007165">
    <property type="term" value="P:signal transduction"/>
    <property type="evidence" value="ECO:0007669"/>
    <property type="project" value="UniProtKB-KW"/>
</dbReference>
<dbReference type="InterPro" id="IPR013604">
    <property type="entry name" value="7TM_chemorcpt"/>
</dbReference>
<dbReference type="PANTHER" id="PTHR21143:SF131">
    <property type="entry name" value="GUSTATORY AND ODORANT RECEPTOR 63A-RELATED"/>
    <property type="match status" value="1"/>
</dbReference>
<dbReference type="PANTHER" id="PTHR21143">
    <property type="entry name" value="INVERTEBRATE GUSTATORY RECEPTOR"/>
    <property type="match status" value="1"/>
</dbReference>
<dbReference type="Pfam" id="PF08395">
    <property type="entry name" value="7tm_7"/>
    <property type="match status" value="1"/>
</dbReference>
<comment type="function">
    <text evidence="3">Gustatory receptor which mediates acceptance or avoidance behavior, depending on its substrates. GPRgr22 and GPRgr24 together are sufficient for olfactory carbon dioxide-chemosensation.</text>
</comment>
<comment type="subcellular location">
    <subcellularLocation>
        <location evidence="1">Cell membrane</location>
        <topology evidence="1">Multi-pass membrane protein</topology>
    </subcellularLocation>
</comment>
<comment type="tissue specificity">
    <text evidence="3">Carbon dioxide-responsive neurons coexpress GPRgr22 and GPRgr24 in the maxillary palp, at both larval and adult life stages.</text>
</comment>
<comment type="similarity">
    <text evidence="4">Belongs to the insect chemoreceptor superfamily. Gustatory receptor (GR) family. Gr21a subfamily.</text>
</comment>
<gene>
    <name evidence="5" type="primary">GPRgr24</name>
    <name type="ORF">AGAP001915</name>
</gene>
<protein>
    <recommendedName>
        <fullName>Gustatory and odorant receptor 24</fullName>
    </recommendedName>
</protein>
<evidence type="ECO:0000250" key="1"/>
<evidence type="ECO:0000255" key="2"/>
<evidence type="ECO:0000269" key="3">
    <source>
    </source>
</evidence>
<evidence type="ECO:0000305" key="4"/>
<evidence type="ECO:0000312" key="5">
    <source>
        <dbReference type="EMBL" id="ABK97614.1"/>
    </source>
</evidence>
<name>GR24_ANOGA</name>
<keyword id="KW-0085">Behavior</keyword>
<keyword id="KW-1003">Cell membrane</keyword>
<keyword id="KW-0325">Glycoprotein</keyword>
<keyword id="KW-0472">Membrane</keyword>
<keyword id="KW-0552">Olfaction</keyword>
<keyword id="KW-0675">Receptor</keyword>
<keyword id="KW-1185">Reference proteome</keyword>
<keyword id="KW-0716">Sensory transduction</keyword>
<keyword id="KW-0807">Transducer</keyword>
<keyword id="KW-0812">Transmembrane</keyword>
<keyword id="KW-1133">Transmembrane helix</keyword>